<name>ARNF_ECOLU</name>
<evidence type="ECO:0000255" key="1">
    <source>
        <dbReference type="HAMAP-Rule" id="MF_00538"/>
    </source>
</evidence>
<evidence type="ECO:0000305" key="2"/>
<feature type="chain" id="PRO_0000382000" description="Probable 4-amino-4-deoxy-L-arabinose-phosphoundecaprenol flippase subunit ArnF">
    <location>
        <begin position="1"/>
        <end position="128"/>
    </location>
</feature>
<feature type="topological domain" description="Cytoplasmic" evidence="1">
    <location>
        <begin position="1"/>
        <end position="2"/>
    </location>
</feature>
<feature type="transmembrane region" description="Helical" evidence="1">
    <location>
        <begin position="3"/>
        <end position="23"/>
    </location>
</feature>
<feature type="topological domain" description="Periplasmic" evidence="1">
    <location>
        <begin position="24"/>
        <end position="35"/>
    </location>
</feature>
<feature type="transmembrane region" description="Helical" evidence="1">
    <location>
        <begin position="36"/>
        <end position="56"/>
    </location>
</feature>
<feature type="topological domain" description="Cytoplasmic" evidence="1">
    <location>
        <begin position="57"/>
        <end position="76"/>
    </location>
</feature>
<feature type="transmembrane region" description="Helical" evidence="1">
    <location>
        <begin position="77"/>
        <end position="97"/>
    </location>
</feature>
<feature type="topological domain" description="Periplasmic" evidence="1">
    <location>
        <begin position="98"/>
        <end position="100"/>
    </location>
</feature>
<feature type="transmembrane region" description="Helical" evidence="1">
    <location>
        <begin position="101"/>
        <end position="121"/>
    </location>
</feature>
<feature type="topological domain" description="Cytoplasmic" evidence="1">
    <location>
        <begin position="122"/>
        <end position="128"/>
    </location>
</feature>
<organism>
    <name type="scientific">Escherichia coli O17:K52:H18 (strain UMN026 / ExPEC)</name>
    <dbReference type="NCBI Taxonomy" id="585056"/>
    <lineage>
        <taxon>Bacteria</taxon>
        <taxon>Pseudomonadati</taxon>
        <taxon>Pseudomonadota</taxon>
        <taxon>Gammaproteobacteria</taxon>
        <taxon>Enterobacterales</taxon>
        <taxon>Enterobacteriaceae</taxon>
        <taxon>Escherichia</taxon>
    </lineage>
</organism>
<reference key="1">
    <citation type="journal article" date="2009" name="PLoS Genet.">
        <title>Organised genome dynamics in the Escherichia coli species results in highly diverse adaptive paths.</title>
        <authorList>
            <person name="Touchon M."/>
            <person name="Hoede C."/>
            <person name="Tenaillon O."/>
            <person name="Barbe V."/>
            <person name="Baeriswyl S."/>
            <person name="Bidet P."/>
            <person name="Bingen E."/>
            <person name="Bonacorsi S."/>
            <person name="Bouchier C."/>
            <person name="Bouvet O."/>
            <person name="Calteau A."/>
            <person name="Chiapello H."/>
            <person name="Clermont O."/>
            <person name="Cruveiller S."/>
            <person name="Danchin A."/>
            <person name="Diard M."/>
            <person name="Dossat C."/>
            <person name="Karoui M.E."/>
            <person name="Frapy E."/>
            <person name="Garry L."/>
            <person name="Ghigo J.M."/>
            <person name="Gilles A.M."/>
            <person name="Johnson J."/>
            <person name="Le Bouguenec C."/>
            <person name="Lescat M."/>
            <person name="Mangenot S."/>
            <person name="Martinez-Jehanne V."/>
            <person name="Matic I."/>
            <person name="Nassif X."/>
            <person name="Oztas S."/>
            <person name="Petit M.A."/>
            <person name="Pichon C."/>
            <person name="Rouy Z."/>
            <person name="Ruf C.S."/>
            <person name="Schneider D."/>
            <person name="Tourret J."/>
            <person name="Vacherie B."/>
            <person name="Vallenet D."/>
            <person name="Medigue C."/>
            <person name="Rocha E.P.C."/>
            <person name="Denamur E."/>
        </authorList>
    </citation>
    <scope>NUCLEOTIDE SEQUENCE [LARGE SCALE GENOMIC DNA]</scope>
    <source>
        <strain>UMN026 / ExPEC</strain>
    </source>
</reference>
<dbReference type="EMBL" id="CU928163">
    <property type="protein sequence ID" value="CAR13783.1"/>
    <property type="status" value="ALT_INIT"/>
    <property type="molecule type" value="Genomic_DNA"/>
</dbReference>
<dbReference type="RefSeq" id="WP_000523862.1">
    <property type="nucleotide sequence ID" value="NC_011751.1"/>
</dbReference>
<dbReference type="STRING" id="585056.ECUMN_2601"/>
<dbReference type="KEGG" id="eum:ECUMN_2601"/>
<dbReference type="PATRIC" id="fig|585056.7.peg.2781"/>
<dbReference type="HOGENOM" id="CLU_1243704_0_0_6"/>
<dbReference type="UniPathway" id="UPA00030"/>
<dbReference type="Proteomes" id="UP000007097">
    <property type="component" value="Chromosome"/>
</dbReference>
<dbReference type="GO" id="GO:0005886">
    <property type="term" value="C:plasma membrane"/>
    <property type="evidence" value="ECO:0007669"/>
    <property type="project" value="UniProtKB-SubCell"/>
</dbReference>
<dbReference type="GO" id="GO:1901505">
    <property type="term" value="F:carbohydrate derivative transmembrane transporter activity"/>
    <property type="evidence" value="ECO:0007669"/>
    <property type="project" value="InterPro"/>
</dbReference>
<dbReference type="GO" id="GO:0009245">
    <property type="term" value="P:lipid A biosynthetic process"/>
    <property type="evidence" value="ECO:0007669"/>
    <property type="project" value="UniProtKB-UniRule"/>
</dbReference>
<dbReference type="GO" id="GO:0009103">
    <property type="term" value="P:lipopolysaccharide biosynthetic process"/>
    <property type="evidence" value="ECO:0007669"/>
    <property type="project" value="UniProtKB-UniRule"/>
</dbReference>
<dbReference type="FunFam" id="1.10.3730.20:FF:000003">
    <property type="entry name" value="Probable 4-amino-4-deoxy-L-arabinose-phosphoundecaprenol flippase subunit ArnF"/>
    <property type="match status" value="1"/>
</dbReference>
<dbReference type="Gene3D" id="1.10.3730.20">
    <property type="match status" value="1"/>
</dbReference>
<dbReference type="HAMAP" id="MF_00538">
    <property type="entry name" value="Flippase_ArnF"/>
    <property type="match status" value="1"/>
</dbReference>
<dbReference type="InterPro" id="IPR022832">
    <property type="entry name" value="Flippase_ArnF"/>
</dbReference>
<dbReference type="InterPro" id="IPR000390">
    <property type="entry name" value="Small_drug/metabolite_transptr"/>
</dbReference>
<dbReference type="NCBIfam" id="NF002816">
    <property type="entry name" value="PRK02971.1-2"/>
    <property type="match status" value="1"/>
</dbReference>
<dbReference type="PANTHER" id="PTHR30561:SF9">
    <property type="entry name" value="4-AMINO-4-DEOXY-L-ARABINOSE-PHOSPHOUNDECAPRENOL FLIPPASE SUBUNIT ARNF-RELATED"/>
    <property type="match status" value="1"/>
</dbReference>
<dbReference type="PANTHER" id="PTHR30561">
    <property type="entry name" value="SMR FAMILY PROTON-DEPENDENT DRUG EFFLUX TRANSPORTER SUGE"/>
    <property type="match status" value="1"/>
</dbReference>
<dbReference type="SUPFAM" id="SSF103481">
    <property type="entry name" value="Multidrug resistance efflux transporter EmrE"/>
    <property type="match status" value="1"/>
</dbReference>
<protein>
    <recommendedName>
        <fullName evidence="1">Probable 4-amino-4-deoxy-L-arabinose-phosphoundecaprenol flippase subunit ArnF</fullName>
        <shortName evidence="1">L-Ara4N-phosphoundecaprenol flippase subunit ArnF</shortName>
    </recommendedName>
    <alternativeName>
        <fullName evidence="1">Undecaprenyl phosphate-aminoarabinose flippase subunit ArnF</fullName>
    </alternativeName>
</protein>
<keyword id="KW-0997">Cell inner membrane</keyword>
<keyword id="KW-1003">Cell membrane</keyword>
<keyword id="KW-0441">Lipid A biosynthesis</keyword>
<keyword id="KW-0444">Lipid biosynthesis</keyword>
<keyword id="KW-0443">Lipid metabolism</keyword>
<keyword id="KW-0448">Lipopolysaccharide biosynthesis</keyword>
<keyword id="KW-0472">Membrane</keyword>
<keyword id="KW-0812">Transmembrane</keyword>
<keyword id="KW-1133">Transmembrane helix</keyword>
<keyword id="KW-0813">Transport</keyword>
<sequence>MGLMWGLFSVIIASAAQLSLGFAASHLPPMTHLWDFIAALLAFGLDARILLLGLLGYLLSVFCWYKTLHKLALSKAYALLSMSYVLVWIASMILPGWEGTFSLKALLGVACIMSGLMLIFLPTTKQRY</sequence>
<gene>
    <name evidence="1" type="primary">arnF</name>
    <name type="ordered locus">ECUMN_2601</name>
</gene>
<proteinExistence type="inferred from homology"/>
<accession>B7N5M4</accession>
<comment type="function">
    <text evidence="1">Translocates 4-amino-4-deoxy-L-arabinose-phosphoundecaprenol (alpha-L-Ara4N-phosphoundecaprenol) from the cytoplasmic to the periplasmic side of the inner membrane.</text>
</comment>
<comment type="pathway">
    <text evidence="1">Bacterial outer membrane biogenesis; lipopolysaccharide biosynthesis.</text>
</comment>
<comment type="subunit">
    <text evidence="1">Heterodimer of ArnE and ArnF.</text>
</comment>
<comment type="subcellular location">
    <subcellularLocation>
        <location evidence="1">Cell inner membrane</location>
        <topology evidence="1">Multi-pass membrane protein</topology>
    </subcellularLocation>
</comment>
<comment type="similarity">
    <text evidence="1">Belongs to the ArnF family.</text>
</comment>
<comment type="sequence caution" evidence="2">
    <conflict type="erroneous initiation">
        <sequence resource="EMBL-CDS" id="CAR13783"/>
    </conflict>
</comment>